<comment type="function">
    <text>Thiol protease inhibitor.</text>
</comment>
<comment type="interaction">
    <interactant intactId="EBI-8832659">
        <id>P09228</id>
    </interactant>
    <interactant intactId="EBI-10173507">
        <id>Q6UY14-3</id>
        <label>ADAMTSL4</label>
    </interactant>
    <organismsDiffer>false</organismsDiffer>
    <experiments>3</experiments>
</comment>
<comment type="interaction">
    <interactant intactId="EBI-8832659">
        <id>P09228</id>
    </interactant>
    <interactant intactId="EBI-743771">
        <id>Q92624</id>
        <label>APPBP2</label>
    </interactant>
    <organismsDiffer>false</organismsDiffer>
    <experiments>3</experiments>
</comment>
<comment type="interaction">
    <interactant intactId="EBI-8832659">
        <id>P09228</id>
    </interactant>
    <interactant intactId="EBI-3867333">
        <id>A8MQ03</id>
        <label>CYSRT1</label>
    </interactant>
    <organismsDiffer>false</organismsDiffer>
    <experiments>3</experiments>
</comment>
<comment type="interaction">
    <interactant intactId="EBI-8832659">
        <id>P09228</id>
    </interactant>
    <interactant intactId="EBI-11959885">
        <id>Q07627</id>
        <label>KRTAP1-1</label>
    </interactant>
    <organismsDiffer>false</organismsDiffer>
    <experiments>3</experiments>
</comment>
<comment type="interaction">
    <interactant intactId="EBI-8832659">
        <id>P09228</id>
    </interactant>
    <interactant intactId="EBI-945833">
        <id>Q7Z3S9</id>
        <label>NOTCH2NLA</label>
    </interactant>
    <organismsDiffer>false</organismsDiffer>
    <experiments>3</experiments>
</comment>
<comment type="interaction">
    <interactant intactId="EBI-8832659">
        <id>P09228</id>
    </interactant>
    <interactant intactId="EBI-22310682">
        <id>P0DPK4</id>
        <label>NOTCH2NLC</label>
    </interactant>
    <organismsDiffer>false</organismsDiffer>
    <experiments>3</experiments>
</comment>
<comment type="interaction">
    <interactant intactId="EBI-8832659">
        <id>P09228</id>
    </interactant>
    <interactant intactId="EBI-395883">
        <id>P07237</id>
        <label>P4HB</label>
    </interactant>
    <organismsDiffer>false</organismsDiffer>
    <experiments>3</experiments>
</comment>
<comment type="interaction">
    <interactant intactId="EBI-8832659">
        <id>P09228</id>
    </interactant>
    <interactant intactId="EBI-348380">
        <id>P25788</id>
        <label>PSMA3</label>
    </interactant>
    <organismsDiffer>false</organismsDiffer>
    <experiments>3</experiments>
</comment>
<comment type="subcellular location">
    <subcellularLocation>
        <location evidence="4">Secreted</location>
    </subcellularLocation>
</comment>
<comment type="tissue specificity">
    <text evidence="1 4">Expressed in submandibular and sublingual saliva but not in parotid saliva (at protein level). Expressed in submandibular gland and parotid gland.</text>
</comment>
<comment type="mass spectrometry"/>
<comment type="similarity">
    <text evidence="5">Belongs to the cystatin family.</text>
</comment>
<gene>
    <name type="primary">CST2</name>
</gene>
<sequence>MAWPLCTLLLLLATQAVALAWSPQEEDRIIEGGIYDADLNDERVQRALHFVISEYNKATEDEYYRRLLRVLRAREQIVGGVNYFFDIEVGRTICTKSQPNLDTCAFHEQPELQKKQLCSFQIYEVPWEDRMSLVNSRCQEA</sequence>
<feature type="signal peptide" evidence="2 3">
    <location>
        <begin position="1"/>
        <end position="20"/>
    </location>
</feature>
<feature type="chain" id="PRO_0000006652" description="Cystatin-SA">
    <location>
        <begin position="21"/>
        <end position="141"/>
    </location>
</feature>
<feature type="short sequence motif" description="Secondary area of contact">
    <location>
        <begin position="76"/>
        <end position="80"/>
    </location>
</feature>
<feature type="site" description="Reactive site">
    <location>
        <position position="32"/>
    </location>
</feature>
<feature type="disulfide bond" evidence="4">
    <location>
        <begin position="94"/>
        <end position="104"/>
    </location>
</feature>
<feature type="disulfide bond" evidence="4">
    <location>
        <begin position="118"/>
        <end position="138"/>
    </location>
</feature>
<dbReference type="EMBL" id="M19673">
    <property type="protein sequence ID" value="AAA36116.1"/>
    <property type="molecule type" value="Genomic_DNA"/>
</dbReference>
<dbReference type="EMBL" id="M19671">
    <property type="protein sequence ID" value="AAA36116.1"/>
    <property type="status" value="JOINED"/>
    <property type="molecule type" value="Genomic_DNA"/>
</dbReference>
<dbReference type="EMBL" id="M19672">
    <property type="protein sequence ID" value="AAA36116.1"/>
    <property type="status" value="JOINED"/>
    <property type="molecule type" value="Genomic_DNA"/>
</dbReference>
<dbReference type="EMBL" id="AF319564">
    <property type="protein sequence ID" value="AAK11570.1"/>
    <property type="molecule type" value="Genomic_DNA"/>
</dbReference>
<dbReference type="EMBL" id="AL591074">
    <property type="status" value="NOT_ANNOTATED_CDS"/>
    <property type="molecule type" value="Genomic_DNA"/>
</dbReference>
<dbReference type="EMBL" id="BC062679">
    <property type="protein sequence ID" value="AAH62679.1"/>
    <property type="molecule type" value="mRNA"/>
</dbReference>
<dbReference type="CCDS" id="CCDS13161.1"/>
<dbReference type="PIR" id="B29632">
    <property type="entry name" value="B29632"/>
</dbReference>
<dbReference type="RefSeq" id="NP_001313.1">
    <property type="nucleotide sequence ID" value="NM_001322.3"/>
</dbReference>
<dbReference type="SMR" id="P09228"/>
<dbReference type="BioGRID" id="107852">
    <property type="interactions" value="59"/>
</dbReference>
<dbReference type="FunCoup" id="P09228">
    <property type="interactions" value="195"/>
</dbReference>
<dbReference type="IntAct" id="P09228">
    <property type="interactions" value="45"/>
</dbReference>
<dbReference type="STRING" id="9606.ENSP00000307540"/>
<dbReference type="MEROPS" id="I25.004"/>
<dbReference type="MEROPS" id="I25.009"/>
<dbReference type="BioMuta" id="CST2"/>
<dbReference type="DMDM" id="118192"/>
<dbReference type="jPOST" id="P09228"/>
<dbReference type="MassIVE" id="P09228"/>
<dbReference type="PaxDb" id="9606-ENSP00000307540"/>
<dbReference type="PeptideAtlas" id="P09228"/>
<dbReference type="PRIDE" id="P09228"/>
<dbReference type="ProteomicsDB" id="52208"/>
<dbReference type="Antibodypedia" id="58258">
    <property type="antibodies" value="336 antibodies from 28 providers"/>
</dbReference>
<dbReference type="DNASU" id="1470"/>
<dbReference type="Ensembl" id="ENST00000304725.3">
    <property type="protein sequence ID" value="ENSP00000307540.2"/>
    <property type="gene ID" value="ENSG00000170369.4"/>
</dbReference>
<dbReference type="GeneID" id="1470"/>
<dbReference type="KEGG" id="hsa:1470"/>
<dbReference type="MANE-Select" id="ENST00000304725.3">
    <property type="protein sequence ID" value="ENSP00000307540.2"/>
    <property type="RefSeq nucleotide sequence ID" value="NM_001322.3"/>
    <property type="RefSeq protein sequence ID" value="NP_001313.1"/>
</dbReference>
<dbReference type="UCSC" id="uc002wtq.2">
    <property type="organism name" value="human"/>
</dbReference>
<dbReference type="AGR" id="HGNC:2474"/>
<dbReference type="CTD" id="1470"/>
<dbReference type="DisGeNET" id="1470"/>
<dbReference type="GeneCards" id="CST2"/>
<dbReference type="HGNC" id="HGNC:2474">
    <property type="gene designation" value="CST2"/>
</dbReference>
<dbReference type="HPA" id="ENSG00000170369">
    <property type="expression patterns" value="Tissue enriched (salivary)"/>
</dbReference>
<dbReference type="MIM" id="123856">
    <property type="type" value="gene"/>
</dbReference>
<dbReference type="neXtProt" id="NX_P09228"/>
<dbReference type="OpenTargets" id="ENSG00000170369"/>
<dbReference type="PharmGKB" id="PA26975"/>
<dbReference type="VEuPathDB" id="HostDB:ENSG00000170369"/>
<dbReference type="eggNOG" id="ENOG502SC50">
    <property type="taxonomic scope" value="Eukaryota"/>
</dbReference>
<dbReference type="GeneTree" id="ENSGT00940000163410"/>
<dbReference type="HOGENOM" id="CLU_118168_0_1_1"/>
<dbReference type="InParanoid" id="P09228"/>
<dbReference type="OMA" id="MWKVIVP"/>
<dbReference type="OrthoDB" id="1908104at2759"/>
<dbReference type="PAN-GO" id="P09228">
    <property type="GO annotations" value="6 GO annotations based on evolutionary models"/>
</dbReference>
<dbReference type="PhylomeDB" id="P09228"/>
<dbReference type="PathwayCommons" id="P09228"/>
<dbReference type="SignaLink" id="P09228"/>
<dbReference type="BioGRID-ORCS" id="1470">
    <property type="hits" value="16 hits in 1131 CRISPR screens"/>
</dbReference>
<dbReference type="GeneWiki" id="CST2"/>
<dbReference type="GenomeRNAi" id="1470"/>
<dbReference type="Pharos" id="P09228">
    <property type="development level" value="Tbio"/>
</dbReference>
<dbReference type="PRO" id="PR:P09228"/>
<dbReference type="Proteomes" id="UP000005640">
    <property type="component" value="Chromosome 20"/>
</dbReference>
<dbReference type="RNAct" id="P09228">
    <property type="molecule type" value="protein"/>
</dbReference>
<dbReference type="Bgee" id="ENSG00000170369">
    <property type="expression patterns" value="Expressed in parotid gland and 93 other cell types or tissues"/>
</dbReference>
<dbReference type="GO" id="GO:0005737">
    <property type="term" value="C:cytoplasm"/>
    <property type="evidence" value="ECO:0000318"/>
    <property type="project" value="GO_Central"/>
</dbReference>
<dbReference type="GO" id="GO:0005615">
    <property type="term" value="C:extracellular space"/>
    <property type="evidence" value="ECO:0000314"/>
    <property type="project" value="UniProtKB"/>
</dbReference>
<dbReference type="GO" id="GO:0031982">
    <property type="term" value="C:vesicle"/>
    <property type="evidence" value="ECO:0000318"/>
    <property type="project" value="GO_Central"/>
</dbReference>
<dbReference type="GO" id="GO:0004869">
    <property type="term" value="F:cysteine-type endopeptidase inhibitor activity"/>
    <property type="evidence" value="ECO:0000318"/>
    <property type="project" value="GO_Central"/>
</dbReference>
<dbReference type="GO" id="GO:0001580">
    <property type="term" value="P:detection of chemical stimulus involved in sensory perception of bitter taste"/>
    <property type="evidence" value="ECO:0000314"/>
    <property type="project" value="UniProtKB"/>
</dbReference>
<dbReference type="CDD" id="cd00042">
    <property type="entry name" value="CY"/>
    <property type="match status" value="1"/>
</dbReference>
<dbReference type="FunFam" id="3.10.450.10:FF:000004">
    <property type="entry name" value="Cystatin C"/>
    <property type="match status" value="1"/>
</dbReference>
<dbReference type="Gene3D" id="3.10.450.10">
    <property type="match status" value="1"/>
</dbReference>
<dbReference type="InterPro" id="IPR000010">
    <property type="entry name" value="Cystatin_dom"/>
</dbReference>
<dbReference type="InterPro" id="IPR046350">
    <property type="entry name" value="Cystatin_sf"/>
</dbReference>
<dbReference type="InterPro" id="IPR018073">
    <property type="entry name" value="Prot_inh_cystat_CS"/>
</dbReference>
<dbReference type="PANTHER" id="PTHR46186">
    <property type="entry name" value="CYSTATIN"/>
    <property type="match status" value="1"/>
</dbReference>
<dbReference type="PANTHER" id="PTHR46186:SF3">
    <property type="entry name" value="CYSTATIN-S-RELATED"/>
    <property type="match status" value="1"/>
</dbReference>
<dbReference type="Pfam" id="PF00031">
    <property type="entry name" value="Cystatin"/>
    <property type="match status" value="1"/>
</dbReference>
<dbReference type="SMART" id="SM00043">
    <property type="entry name" value="CY"/>
    <property type="match status" value="1"/>
</dbReference>
<dbReference type="SUPFAM" id="SSF54403">
    <property type="entry name" value="Cystatin/monellin"/>
    <property type="match status" value="1"/>
</dbReference>
<dbReference type="PROSITE" id="PS00287">
    <property type="entry name" value="CYSTATIN"/>
    <property type="match status" value="1"/>
</dbReference>
<evidence type="ECO:0000269" key="1">
    <source>
    </source>
</evidence>
<evidence type="ECO:0000269" key="2">
    <source>
    </source>
</evidence>
<evidence type="ECO:0000269" key="3">
    <source>
    </source>
</evidence>
<evidence type="ECO:0000269" key="4">
    <source>
    </source>
</evidence>
<evidence type="ECO:0000305" key="5"/>
<organism>
    <name type="scientific">Homo sapiens</name>
    <name type="common">Human</name>
    <dbReference type="NCBI Taxonomy" id="9606"/>
    <lineage>
        <taxon>Eukaryota</taxon>
        <taxon>Metazoa</taxon>
        <taxon>Chordata</taxon>
        <taxon>Craniata</taxon>
        <taxon>Vertebrata</taxon>
        <taxon>Euteleostomi</taxon>
        <taxon>Mammalia</taxon>
        <taxon>Eutheria</taxon>
        <taxon>Euarchontoglires</taxon>
        <taxon>Primates</taxon>
        <taxon>Haplorrhini</taxon>
        <taxon>Catarrhini</taxon>
        <taxon>Hominidae</taxon>
        <taxon>Homo</taxon>
    </lineage>
</organism>
<keyword id="KW-0903">Direct protein sequencing</keyword>
<keyword id="KW-1015">Disulfide bond</keyword>
<keyword id="KW-0646">Protease inhibitor</keyword>
<keyword id="KW-1267">Proteomics identification</keyword>
<keyword id="KW-1185">Reference proteome</keyword>
<keyword id="KW-0964">Secreted</keyword>
<keyword id="KW-0732">Signal</keyword>
<keyword id="KW-0789">Thiol protease inhibitor</keyword>
<accession>P09228</accession>
<accession>Q9UCQ7</accession>
<protein>
    <recommendedName>
        <fullName>Cystatin-SA</fullName>
    </recommendedName>
    <alternativeName>
        <fullName>Cystatin-2</fullName>
    </alternativeName>
    <alternativeName>
        <fullName>Cystatin-S5</fullName>
    </alternativeName>
</protein>
<proteinExistence type="evidence at protein level"/>
<name>CYTT_HUMAN</name>
<reference key="1">
    <citation type="journal article" date="1987" name="Gene">
        <title>Human cysteine-proteinase inhibitors: nucleotide sequence analysis of three members of the cystatin gene family.</title>
        <authorList>
            <person name="Saitoh E."/>
            <person name="Kim H.-S."/>
            <person name="Smithies O."/>
            <person name="Maeda N."/>
        </authorList>
    </citation>
    <scope>NUCLEOTIDE SEQUENCE [GENOMIC DNA]</scope>
</reference>
<reference key="2">
    <citation type="submission" date="2000-11" db="EMBL/GenBank/DDBJ databases">
        <title>Acquisition of complex patterns of differential expression in epithelial cell populations during the evolution of type 2 cystatin genes.</title>
        <authorList>
            <person name="Dickinson D.P."/>
            <person name="Hewett-Emmett D."/>
            <person name="Thiesse M."/>
        </authorList>
    </citation>
    <scope>NUCLEOTIDE SEQUENCE [GENOMIC DNA]</scope>
</reference>
<reference key="3">
    <citation type="journal article" date="2001" name="Nature">
        <title>The DNA sequence and comparative analysis of human chromosome 20.</title>
        <authorList>
            <person name="Deloukas P."/>
            <person name="Matthews L.H."/>
            <person name="Ashurst J.L."/>
            <person name="Burton J."/>
            <person name="Gilbert J.G.R."/>
            <person name="Jones M."/>
            <person name="Stavrides G."/>
            <person name="Almeida J.P."/>
            <person name="Babbage A.K."/>
            <person name="Bagguley C.L."/>
            <person name="Bailey J."/>
            <person name="Barlow K.F."/>
            <person name="Bates K.N."/>
            <person name="Beard L.M."/>
            <person name="Beare D.M."/>
            <person name="Beasley O.P."/>
            <person name="Bird C.P."/>
            <person name="Blakey S.E."/>
            <person name="Bridgeman A.M."/>
            <person name="Brown A.J."/>
            <person name="Buck D."/>
            <person name="Burrill W.D."/>
            <person name="Butler A.P."/>
            <person name="Carder C."/>
            <person name="Carter N.P."/>
            <person name="Chapman J.C."/>
            <person name="Clamp M."/>
            <person name="Clark G."/>
            <person name="Clark L.N."/>
            <person name="Clark S.Y."/>
            <person name="Clee C.M."/>
            <person name="Clegg S."/>
            <person name="Cobley V.E."/>
            <person name="Collier R.E."/>
            <person name="Connor R.E."/>
            <person name="Corby N.R."/>
            <person name="Coulson A."/>
            <person name="Coville G.J."/>
            <person name="Deadman R."/>
            <person name="Dhami P.D."/>
            <person name="Dunn M."/>
            <person name="Ellington A.G."/>
            <person name="Frankland J.A."/>
            <person name="Fraser A."/>
            <person name="French L."/>
            <person name="Garner P."/>
            <person name="Grafham D.V."/>
            <person name="Griffiths C."/>
            <person name="Griffiths M.N.D."/>
            <person name="Gwilliam R."/>
            <person name="Hall R.E."/>
            <person name="Hammond S."/>
            <person name="Harley J.L."/>
            <person name="Heath P.D."/>
            <person name="Ho S."/>
            <person name="Holden J.L."/>
            <person name="Howden P.J."/>
            <person name="Huckle E."/>
            <person name="Hunt A.R."/>
            <person name="Hunt S.E."/>
            <person name="Jekosch K."/>
            <person name="Johnson C.M."/>
            <person name="Johnson D."/>
            <person name="Kay M.P."/>
            <person name="Kimberley A.M."/>
            <person name="King A."/>
            <person name="Knights A."/>
            <person name="Laird G.K."/>
            <person name="Lawlor S."/>
            <person name="Lehvaeslaiho M.H."/>
            <person name="Leversha M.A."/>
            <person name="Lloyd C."/>
            <person name="Lloyd D.M."/>
            <person name="Lovell J.D."/>
            <person name="Marsh V.L."/>
            <person name="Martin S.L."/>
            <person name="McConnachie L.J."/>
            <person name="McLay K."/>
            <person name="McMurray A.A."/>
            <person name="Milne S.A."/>
            <person name="Mistry D."/>
            <person name="Moore M.J.F."/>
            <person name="Mullikin J.C."/>
            <person name="Nickerson T."/>
            <person name="Oliver K."/>
            <person name="Parker A."/>
            <person name="Patel R."/>
            <person name="Pearce T.A.V."/>
            <person name="Peck A.I."/>
            <person name="Phillimore B.J.C.T."/>
            <person name="Prathalingam S.R."/>
            <person name="Plumb R.W."/>
            <person name="Ramsay H."/>
            <person name="Rice C.M."/>
            <person name="Ross M.T."/>
            <person name="Scott C.E."/>
            <person name="Sehra H.K."/>
            <person name="Shownkeen R."/>
            <person name="Sims S."/>
            <person name="Skuce C.D."/>
            <person name="Smith M.L."/>
            <person name="Soderlund C."/>
            <person name="Steward C.A."/>
            <person name="Sulston J.E."/>
            <person name="Swann R.M."/>
            <person name="Sycamore N."/>
            <person name="Taylor R."/>
            <person name="Tee L."/>
            <person name="Thomas D.W."/>
            <person name="Thorpe A."/>
            <person name="Tracey A."/>
            <person name="Tromans A.C."/>
            <person name="Vaudin M."/>
            <person name="Wall M."/>
            <person name="Wallis J.M."/>
            <person name="Whitehead S.L."/>
            <person name="Whittaker P."/>
            <person name="Willey D.L."/>
            <person name="Williams L."/>
            <person name="Williams S.A."/>
            <person name="Wilming L."/>
            <person name="Wray P.W."/>
            <person name="Hubbard T."/>
            <person name="Durbin R.M."/>
            <person name="Bentley D.R."/>
            <person name="Beck S."/>
            <person name="Rogers J."/>
        </authorList>
    </citation>
    <scope>NUCLEOTIDE SEQUENCE [LARGE SCALE GENOMIC DNA]</scope>
</reference>
<reference key="4">
    <citation type="journal article" date="2004" name="Genome Res.">
        <title>The status, quality, and expansion of the NIH full-length cDNA project: the Mammalian Gene Collection (MGC).</title>
        <authorList>
            <consortium name="The MGC Project Team"/>
        </authorList>
    </citation>
    <scope>NUCLEOTIDE SEQUENCE [LARGE SCALE MRNA]</scope>
    <source>
        <tissue>Thyroid</tissue>
    </source>
</reference>
<reference key="5">
    <citation type="journal article" date="1991" name="J. Biochem.">
        <title>Identification of full-sized forms of salivary (S-type) cystatins (cystatin SN, cystatin SA, cystatin S, and two phosphorylated forms of cystatin S) in human whole saliva and determination of phosphorylation sites of cystatin S.</title>
        <authorList>
            <person name="Isemura S."/>
            <person name="Saitoh E."/>
            <person name="Sanada K."/>
            <person name="Minakata K."/>
        </authorList>
    </citation>
    <scope>PROTEIN SEQUENCE OF 21-40</scope>
    <source>
        <tissue>Saliva</tissue>
    </source>
</reference>
<reference key="6">
    <citation type="journal article" date="2004" name="Protein Sci.">
        <title>Signal peptide prediction based on analysis of experimentally verified cleavage sites.</title>
        <authorList>
            <person name="Zhang Z."/>
            <person name="Henzel W.J."/>
        </authorList>
    </citation>
    <scope>PROTEIN SEQUENCE OF 21-35</scope>
</reference>
<reference key="7">
    <citation type="journal article" date="1987" name="J. Biochem.">
        <title>Characterization and amino acid sequence of a new acidic cysteine proteinase inhibitor (cystatin SA) structurally closely related to cystatin S, from human whole saliva.</title>
        <authorList>
            <person name="Isemura S."/>
            <person name="Saitoh E."/>
            <person name="Sanada K."/>
        </authorList>
    </citation>
    <scope>PROTEIN SEQUENCE OF 25-141</scope>
</reference>
<reference key="8">
    <citation type="book" date="1986" name="Cysteine proteinases and their inhibitors">
        <title>Characterization and amino acid sequence of a new acidic cysteine proteinase inhibitor (cystatin SA) structurally closely related to cystatin S, from human whole saliva.</title>
        <editorList>
            <person name="Turk V."/>
        </editorList>
        <authorList>
            <person name="Isemura S."/>
            <person name="Saitoh E."/>
            <person name="Sanada K."/>
            <person name="Isemura M."/>
            <person name="Ito S."/>
        </authorList>
    </citation>
    <scope>PRELIMINARY PROTEIN SEQUENCE OF 25-141</scope>
</reference>
<reference key="9">
    <citation type="journal article" date="1988" name="Biol. Chem. Hoppe-Seyler">
        <title>Cystatin superfamily. Evidence that family II cystatin genes are evolutionarily related to family III cystatin genes.</title>
        <authorList>
            <person name="Saitoh E."/>
            <person name="Isemura S."/>
            <person name="Sanada K."/>
            <person name="Kim H.-S."/>
            <person name="Smithies O."/>
            <person name="Maeda N."/>
        </authorList>
    </citation>
    <scope>NUCLEOTIDE SEQUENCE [GENOMIC DNA] OF 25-141</scope>
</reference>
<reference key="10">
    <citation type="journal article" date="2002" name="DNA Cell Biol.">
        <title>Expression of type 2 cystatin genes CST1-CST5 in adult human tissues and the developing submandibular gland.</title>
        <authorList>
            <person name="Dickinson D.P."/>
            <person name="Thiesse M."/>
            <person name="Hicks M.J."/>
        </authorList>
    </citation>
    <scope>TISSUE SPECIFICITY</scope>
</reference>
<reference key="11">
    <citation type="journal article" date="2010" name="J. Am. Soc. Mass Spectrom.">
        <title>Confident assignment of intact mass tags to human salivary cystatins using top-down Fourier-transform ion cyclotron resonance mass spectrometry.</title>
        <authorList>
            <person name="Ryan C.M."/>
            <person name="Souda P."/>
            <person name="Halgand F."/>
            <person name="Wong D.T."/>
            <person name="Loo J.A."/>
            <person name="Faull K.F."/>
            <person name="Whitelegge J.P."/>
        </authorList>
    </citation>
    <scope>DISULFIDE BONDS</scope>
    <scope>TISSUE SPECIFICITY</scope>
    <scope>SUBCELLULAR LOCATION</scope>
    <scope>MASS SPECTROMETRY</scope>
    <source>
        <tissue>Saliva</tissue>
    </source>
</reference>
<reference key="12">
    <citation type="journal article" date="2015" name="J. Proteome Res.">
        <title>Human basal tear peptidome characterization by CID, HCD, and ETD followed by in silico and in vitro analyses for antimicrobial peptide identification.</title>
        <authorList>
            <person name="Azkargorta M."/>
            <person name="Soria J."/>
            <person name="Ojeda C."/>
            <person name="Guzman F."/>
            <person name="Acera A."/>
            <person name="Iloro I."/>
            <person name="Suarez T."/>
            <person name="Elortza F."/>
        </authorList>
    </citation>
    <scope>IDENTIFICATION BY MASS SPECTROMETRY</scope>
    <source>
        <tissue>Tear</tissue>
    </source>
</reference>